<reference key="1">
    <citation type="journal article" date="2015" name="Genome Announc.">
        <title>Complete genome sequence of Anaeromyxobacter sp. Fw109-5, an anaerobic, metal-reducing bacterium isolated from a contaminated subsurface environment.</title>
        <authorList>
            <person name="Hwang C."/>
            <person name="Copeland A."/>
            <person name="Lucas S."/>
            <person name="Lapidus A."/>
            <person name="Barry K."/>
            <person name="Glavina Del Rio T."/>
            <person name="Dalin E."/>
            <person name="Tice H."/>
            <person name="Pitluck S."/>
            <person name="Sims D."/>
            <person name="Brettin T."/>
            <person name="Bruce D.C."/>
            <person name="Detter J.C."/>
            <person name="Han C.S."/>
            <person name="Schmutz J."/>
            <person name="Larimer F.W."/>
            <person name="Land M.L."/>
            <person name="Hauser L.J."/>
            <person name="Kyrpides N."/>
            <person name="Lykidis A."/>
            <person name="Richardson P."/>
            <person name="Belieav A."/>
            <person name="Sanford R.A."/>
            <person name="Loeffler F.E."/>
            <person name="Fields M.W."/>
        </authorList>
    </citation>
    <scope>NUCLEOTIDE SEQUENCE [LARGE SCALE GENOMIC DNA]</scope>
    <source>
        <strain>Fw109-5</strain>
    </source>
</reference>
<proteinExistence type="inferred from homology"/>
<evidence type="ECO:0000255" key="1">
    <source>
        <dbReference type="HAMAP-Rule" id="MF_01014"/>
    </source>
</evidence>
<accession>A7H8C3</accession>
<sequence>MLVIPAIDLMGGEAVRLEKGDFATKTVYARHPAEKAEEFARAGATLLHVVDLDGAKAGWPVNLDAVRAICEVPGIEVELGGGLRSLPDIEKVLALGVRYVVLGTAAVERLGLVEQACQRFPGQVRAGIDARNGEVKIAGWLEGTGLAAVDVARKVKGAGVGLVEYTDVARDGMFTGVDAAGAARIQAEAGIPVVASGGVASLDDVTACRAAGLAGVIVGKALYERRIDLAAAIRAAAA</sequence>
<name>HIS4_ANADF</name>
<keyword id="KW-0028">Amino-acid biosynthesis</keyword>
<keyword id="KW-0963">Cytoplasm</keyword>
<keyword id="KW-0368">Histidine biosynthesis</keyword>
<keyword id="KW-0413">Isomerase</keyword>
<keyword id="KW-1185">Reference proteome</keyword>
<gene>
    <name evidence="1" type="primary">hisA</name>
    <name type="ordered locus">Anae109_0756</name>
</gene>
<protein>
    <recommendedName>
        <fullName evidence="1">1-(5-phosphoribosyl)-5-[(5-phosphoribosylamino)methylideneamino] imidazole-4-carboxamide isomerase</fullName>
        <ecNumber evidence="1">5.3.1.16</ecNumber>
    </recommendedName>
    <alternativeName>
        <fullName evidence="1">Phosphoribosylformimino-5-aminoimidazole carboxamide ribotide isomerase</fullName>
    </alternativeName>
</protein>
<feature type="chain" id="PRO_1000063182" description="1-(5-phosphoribosyl)-5-[(5-phosphoribosylamino)methylideneamino] imidazole-4-carboxamide isomerase">
    <location>
        <begin position="1"/>
        <end position="238"/>
    </location>
</feature>
<feature type="active site" description="Proton acceptor" evidence="1">
    <location>
        <position position="8"/>
    </location>
</feature>
<feature type="active site" description="Proton donor" evidence="1">
    <location>
        <position position="129"/>
    </location>
</feature>
<comment type="catalytic activity">
    <reaction evidence="1">
        <text>1-(5-phospho-beta-D-ribosyl)-5-[(5-phospho-beta-D-ribosylamino)methylideneamino]imidazole-4-carboxamide = 5-[(5-phospho-1-deoxy-D-ribulos-1-ylimino)methylamino]-1-(5-phospho-beta-D-ribosyl)imidazole-4-carboxamide</text>
        <dbReference type="Rhea" id="RHEA:15469"/>
        <dbReference type="ChEBI" id="CHEBI:58435"/>
        <dbReference type="ChEBI" id="CHEBI:58525"/>
        <dbReference type="EC" id="5.3.1.16"/>
    </reaction>
</comment>
<comment type="pathway">
    <text evidence="1">Amino-acid biosynthesis; L-histidine biosynthesis; L-histidine from 5-phospho-alpha-D-ribose 1-diphosphate: step 4/9.</text>
</comment>
<comment type="subcellular location">
    <subcellularLocation>
        <location evidence="1">Cytoplasm</location>
    </subcellularLocation>
</comment>
<comment type="similarity">
    <text evidence="1">Belongs to the HisA/HisF family.</text>
</comment>
<organism>
    <name type="scientific">Anaeromyxobacter sp. (strain Fw109-5)</name>
    <dbReference type="NCBI Taxonomy" id="404589"/>
    <lineage>
        <taxon>Bacteria</taxon>
        <taxon>Pseudomonadati</taxon>
        <taxon>Myxococcota</taxon>
        <taxon>Myxococcia</taxon>
        <taxon>Myxococcales</taxon>
        <taxon>Cystobacterineae</taxon>
        <taxon>Anaeromyxobacteraceae</taxon>
        <taxon>Anaeromyxobacter</taxon>
    </lineage>
</organism>
<dbReference type="EC" id="5.3.1.16" evidence="1"/>
<dbReference type="EMBL" id="CP000769">
    <property type="protein sequence ID" value="ABS24969.1"/>
    <property type="molecule type" value="Genomic_DNA"/>
</dbReference>
<dbReference type="RefSeq" id="WP_011985075.1">
    <property type="nucleotide sequence ID" value="NC_009675.1"/>
</dbReference>
<dbReference type="SMR" id="A7H8C3"/>
<dbReference type="STRING" id="404589.Anae109_0756"/>
<dbReference type="KEGG" id="afw:Anae109_0756"/>
<dbReference type="eggNOG" id="COG0106">
    <property type="taxonomic scope" value="Bacteria"/>
</dbReference>
<dbReference type="HOGENOM" id="CLU_048577_1_1_7"/>
<dbReference type="OrthoDB" id="9807749at2"/>
<dbReference type="UniPathway" id="UPA00031">
    <property type="reaction ID" value="UER00009"/>
</dbReference>
<dbReference type="Proteomes" id="UP000006382">
    <property type="component" value="Chromosome"/>
</dbReference>
<dbReference type="GO" id="GO:0005737">
    <property type="term" value="C:cytoplasm"/>
    <property type="evidence" value="ECO:0007669"/>
    <property type="project" value="UniProtKB-SubCell"/>
</dbReference>
<dbReference type="GO" id="GO:0003949">
    <property type="term" value="F:1-(5-phosphoribosyl)-5-[(5-phosphoribosylamino)methylideneamino]imidazole-4-carboxamide isomerase activity"/>
    <property type="evidence" value="ECO:0007669"/>
    <property type="project" value="UniProtKB-UniRule"/>
</dbReference>
<dbReference type="GO" id="GO:0000105">
    <property type="term" value="P:L-histidine biosynthetic process"/>
    <property type="evidence" value="ECO:0007669"/>
    <property type="project" value="UniProtKB-UniRule"/>
</dbReference>
<dbReference type="GO" id="GO:0000162">
    <property type="term" value="P:L-tryptophan biosynthetic process"/>
    <property type="evidence" value="ECO:0007669"/>
    <property type="project" value="TreeGrafter"/>
</dbReference>
<dbReference type="CDD" id="cd04732">
    <property type="entry name" value="HisA"/>
    <property type="match status" value="1"/>
</dbReference>
<dbReference type="FunFam" id="3.20.20.70:FF:000009">
    <property type="entry name" value="1-(5-phosphoribosyl)-5-[(5-phosphoribosylamino)methylideneamino] imidazole-4-carboxamide isomerase"/>
    <property type="match status" value="1"/>
</dbReference>
<dbReference type="Gene3D" id="3.20.20.70">
    <property type="entry name" value="Aldolase class I"/>
    <property type="match status" value="1"/>
</dbReference>
<dbReference type="HAMAP" id="MF_01014">
    <property type="entry name" value="HisA"/>
    <property type="match status" value="1"/>
</dbReference>
<dbReference type="InterPro" id="IPR013785">
    <property type="entry name" value="Aldolase_TIM"/>
</dbReference>
<dbReference type="InterPro" id="IPR006062">
    <property type="entry name" value="His_biosynth"/>
</dbReference>
<dbReference type="InterPro" id="IPR006063">
    <property type="entry name" value="HisA_bact_arch"/>
</dbReference>
<dbReference type="InterPro" id="IPR044524">
    <property type="entry name" value="Isoase_HisA-like"/>
</dbReference>
<dbReference type="InterPro" id="IPR023016">
    <property type="entry name" value="Isoase_HisA-like_bact"/>
</dbReference>
<dbReference type="InterPro" id="IPR011060">
    <property type="entry name" value="RibuloseP-bd_barrel"/>
</dbReference>
<dbReference type="NCBIfam" id="TIGR00007">
    <property type="entry name" value="1-(5-phosphoribosyl)-5-[(5-phosphoribosylamino)methylideneamino]imidazole-4-carboxamide isomerase"/>
    <property type="match status" value="1"/>
</dbReference>
<dbReference type="PANTHER" id="PTHR43090">
    <property type="entry name" value="1-(5-PHOSPHORIBOSYL)-5-[(5-PHOSPHORIBOSYLAMINO)METHYLIDENEAMINO] IMIDAZOLE-4-CARBOXAMIDE ISOMERASE"/>
    <property type="match status" value="1"/>
</dbReference>
<dbReference type="PANTHER" id="PTHR43090:SF2">
    <property type="entry name" value="1-(5-PHOSPHORIBOSYL)-5-[(5-PHOSPHORIBOSYLAMINO)METHYLIDENEAMINO] IMIDAZOLE-4-CARBOXAMIDE ISOMERASE"/>
    <property type="match status" value="1"/>
</dbReference>
<dbReference type="Pfam" id="PF00977">
    <property type="entry name" value="His_biosynth"/>
    <property type="match status" value="1"/>
</dbReference>
<dbReference type="SUPFAM" id="SSF51366">
    <property type="entry name" value="Ribulose-phoshate binding barrel"/>
    <property type="match status" value="1"/>
</dbReference>